<evidence type="ECO:0000255" key="1">
    <source>
        <dbReference type="HAMAP-Rule" id="MF_01818"/>
    </source>
</evidence>
<sequence>MELVFLGTGAGVPSRGRNVTSIALSMLNERNTIWLFDCGEATQHQIMRSQIKLSKLEKIFITHMHGDHIFGLPGLLSSRSFQGGDSNLTIYGPAGIAEYVETSLRLSGTRLTYKINFEEIEPGLIFEDEMFLVTADDLDHGVRSFGYRIVEKDKQGALNAEKLKADGVEAGPVFQKLKNGEIVTLADGRVIDGKNYIGEPQKGKIISIFGDTKETANELELALNADILVHEATFEGDKAKMAGEYMHSTTLQAANLAKTANVKKLILTHISSRYDRDASKELLIEAKTIFENTEIAYDLAVFPIGE</sequence>
<feature type="chain" id="PRO_1000216011" description="Ribonuclease Z">
    <location>
        <begin position="1"/>
        <end position="306"/>
    </location>
</feature>
<feature type="active site" description="Proton acceptor" evidence="1">
    <location>
        <position position="67"/>
    </location>
</feature>
<feature type="binding site" evidence="1">
    <location>
        <position position="63"/>
    </location>
    <ligand>
        <name>Zn(2+)</name>
        <dbReference type="ChEBI" id="CHEBI:29105"/>
        <label>1</label>
        <note>catalytic</note>
    </ligand>
</feature>
<feature type="binding site" evidence="1">
    <location>
        <position position="65"/>
    </location>
    <ligand>
        <name>Zn(2+)</name>
        <dbReference type="ChEBI" id="CHEBI:29105"/>
        <label>1</label>
        <note>catalytic</note>
    </ligand>
</feature>
<feature type="binding site" evidence="1">
    <location>
        <position position="67"/>
    </location>
    <ligand>
        <name>Zn(2+)</name>
        <dbReference type="ChEBI" id="CHEBI:29105"/>
        <label>2</label>
        <note>catalytic</note>
    </ligand>
</feature>
<feature type="binding site" evidence="1">
    <location>
        <position position="68"/>
    </location>
    <ligand>
        <name>Zn(2+)</name>
        <dbReference type="ChEBI" id="CHEBI:29105"/>
        <label>2</label>
        <note>catalytic</note>
    </ligand>
</feature>
<feature type="binding site" evidence="1">
    <location>
        <position position="140"/>
    </location>
    <ligand>
        <name>Zn(2+)</name>
        <dbReference type="ChEBI" id="CHEBI:29105"/>
        <label>1</label>
        <note>catalytic</note>
    </ligand>
</feature>
<feature type="binding site" evidence="1">
    <location>
        <position position="211"/>
    </location>
    <ligand>
        <name>Zn(2+)</name>
        <dbReference type="ChEBI" id="CHEBI:29105"/>
        <label>1</label>
        <note>catalytic</note>
    </ligand>
</feature>
<feature type="binding site" evidence="1">
    <location>
        <position position="211"/>
    </location>
    <ligand>
        <name>Zn(2+)</name>
        <dbReference type="ChEBI" id="CHEBI:29105"/>
        <label>2</label>
        <note>catalytic</note>
    </ligand>
</feature>
<feature type="binding site" evidence="1">
    <location>
        <position position="269"/>
    </location>
    <ligand>
        <name>Zn(2+)</name>
        <dbReference type="ChEBI" id="CHEBI:29105"/>
        <label>2</label>
        <note>catalytic</note>
    </ligand>
</feature>
<protein>
    <recommendedName>
        <fullName evidence="1">Ribonuclease Z</fullName>
        <shortName evidence="1">RNase Z</shortName>
        <ecNumber evidence="1">3.1.26.11</ecNumber>
    </recommendedName>
    <alternativeName>
        <fullName evidence="1">tRNA 3 endonuclease</fullName>
    </alternativeName>
    <alternativeName>
        <fullName evidence="1">tRNase Z</fullName>
    </alternativeName>
</protein>
<reference key="1">
    <citation type="journal article" date="2012" name="BMC Genomics">
        <title>Comparative genomics and transcriptomics of lineages I, II, and III strains of Listeria monocytogenes.</title>
        <authorList>
            <person name="Hain T."/>
            <person name="Ghai R."/>
            <person name="Billion A."/>
            <person name="Kuenne C.T."/>
            <person name="Steinweg C."/>
            <person name="Izar B."/>
            <person name="Mohamed W."/>
            <person name="Mraheil M."/>
            <person name="Domann E."/>
            <person name="Schaffrath S."/>
            <person name="Karst U."/>
            <person name="Goesmann A."/>
            <person name="Oehm S."/>
            <person name="Puhler A."/>
            <person name="Merkl R."/>
            <person name="Vorwerk S."/>
            <person name="Glaser P."/>
            <person name="Garrido P."/>
            <person name="Rusniok C."/>
            <person name="Buchrieser C."/>
            <person name="Goebel W."/>
            <person name="Chakraborty T."/>
        </authorList>
    </citation>
    <scope>NUCLEOTIDE SEQUENCE [LARGE SCALE GENOMIC DNA]</scope>
    <source>
        <strain>CLIP80459</strain>
    </source>
</reference>
<accession>C1KWS1</accession>
<keyword id="KW-0255">Endonuclease</keyword>
<keyword id="KW-0378">Hydrolase</keyword>
<keyword id="KW-0479">Metal-binding</keyword>
<keyword id="KW-0540">Nuclease</keyword>
<keyword id="KW-0819">tRNA processing</keyword>
<keyword id="KW-0862">Zinc</keyword>
<comment type="function">
    <text evidence="1">Zinc phosphodiesterase, which displays some tRNA 3'-processing endonuclease activity. Probably involved in tRNA maturation, by removing a 3'-trailer from precursor tRNA.</text>
</comment>
<comment type="catalytic activity">
    <reaction evidence="1">
        <text>Endonucleolytic cleavage of RNA, removing extra 3' nucleotides from tRNA precursor, generating 3' termini of tRNAs. A 3'-hydroxy group is left at the tRNA terminus and a 5'-phosphoryl group is left at the trailer molecule.</text>
        <dbReference type="EC" id="3.1.26.11"/>
    </reaction>
</comment>
<comment type="cofactor">
    <cofactor evidence="1">
        <name>Zn(2+)</name>
        <dbReference type="ChEBI" id="CHEBI:29105"/>
    </cofactor>
    <text evidence="1">Binds 2 Zn(2+) ions.</text>
</comment>
<comment type="subunit">
    <text evidence="1">Homodimer.</text>
</comment>
<comment type="similarity">
    <text evidence="1">Belongs to the RNase Z family.</text>
</comment>
<proteinExistence type="inferred from homology"/>
<gene>
    <name evidence="1" type="primary">rnz</name>
    <name type="ordered locus">Lm4b_01989</name>
</gene>
<dbReference type="EC" id="3.1.26.11" evidence="1"/>
<dbReference type="EMBL" id="FM242711">
    <property type="protein sequence ID" value="CAS05746.1"/>
    <property type="molecule type" value="Genomic_DNA"/>
</dbReference>
<dbReference type="RefSeq" id="WP_003725869.1">
    <property type="nucleotide sequence ID" value="NC_012488.1"/>
</dbReference>
<dbReference type="SMR" id="C1KWS1"/>
<dbReference type="KEGG" id="lmc:Lm4b_01989"/>
<dbReference type="HOGENOM" id="CLU_031317_2_0_9"/>
<dbReference type="GO" id="GO:0042781">
    <property type="term" value="F:3'-tRNA processing endoribonuclease activity"/>
    <property type="evidence" value="ECO:0007669"/>
    <property type="project" value="UniProtKB-UniRule"/>
</dbReference>
<dbReference type="GO" id="GO:0008270">
    <property type="term" value="F:zinc ion binding"/>
    <property type="evidence" value="ECO:0007669"/>
    <property type="project" value="UniProtKB-UniRule"/>
</dbReference>
<dbReference type="CDD" id="cd07717">
    <property type="entry name" value="RNaseZ_ZiPD-like_MBL-fold"/>
    <property type="match status" value="1"/>
</dbReference>
<dbReference type="FunFam" id="3.60.15.10:FF:000002">
    <property type="entry name" value="Ribonuclease Z"/>
    <property type="match status" value="1"/>
</dbReference>
<dbReference type="Gene3D" id="3.60.15.10">
    <property type="entry name" value="Ribonuclease Z/Hydroxyacylglutathione hydrolase-like"/>
    <property type="match status" value="1"/>
</dbReference>
<dbReference type="HAMAP" id="MF_01818">
    <property type="entry name" value="RNase_Z_BN"/>
    <property type="match status" value="1"/>
</dbReference>
<dbReference type="InterPro" id="IPR001279">
    <property type="entry name" value="Metallo-B-lactamas"/>
</dbReference>
<dbReference type="InterPro" id="IPR036866">
    <property type="entry name" value="RibonucZ/Hydroxyglut_hydro"/>
</dbReference>
<dbReference type="InterPro" id="IPR013471">
    <property type="entry name" value="RNase_Z/BN"/>
</dbReference>
<dbReference type="NCBIfam" id="NF000800">
    <property type="entry name" value="PRK00055.1-1"/>
    <property type="match status" value="1"/>
</dbReference>
<dbReference type="NCBIfam" id="NF000801">
    <property type="entry name" value="PRK00055.1-3"/>
    <property type="match status" value="1"/>
</dbReference>
<dbReference type="NCBIfam" id="TIGR02651">
    <property type="entry name" value="RNase_Z"/>
    <property type="match status" value="1"/>
</dbReference>
<dbReference type="PANTHER" id="PTHR46018">
    <property type="entry name" value="ZINC PHOSPHODIESTERASE ELAC PROTEIN 1"/>
    <property type="match status" value="1"/>
</dbReference>
<dbReference type="PANTHER" id="PTHR46018:SF2">
    <property type="entry name" value="ZINC PHOSPHODIESTERASE ELAC PROTEIN 1"/>
    <property type="match status" value="1"/>
</dbReference>
<dbReference type="Pfam" id="PF12706">
    <property type="entry name" value="Lactamase_B_2"/>
    <property type="match status" value="1"/>
</dbReference>
<dbReference type="SMART" id="SM00849">
    <property type="entry name" value="Lactamase_B"/>
    <property type="match status" value="1"/>
</dbReference>
<dbReference type="SUPFAM" id="SSF56281">
    <property type="entry name" value="Metallo-hydrolase/oxidoreductase"/>
    <property type="match status" value="1"/>
</dbReference>
<name>RNZ_LISMC</name>
<organism>
    <name type="scientific">Listeria monocytogenes serotype 4b (strain CLIP80459)</name>
    <dbReference type="NCBI Taxonomy" id="568819"/>
    <lineage>
        <taxon>Bacteria</taxon>
        <taxon>Bacillati</taxon>
        <taxon>Bacillota</taxon>
        <taxon>Bacilli</taxon>
        <taxon>Bacillales</taxon>
        <taxon>Listeriaceae</taxon>
        <taxon>Listeria</taxon>
    </lineage>
</organism>